<keyword id="KW-0967">Endosome</keyword>
<keyword id="KW-0342">GTP-binding</keyword>
<keyword id="KW-0449">Lipoprotein</keyword>
<keyword id="KW-0472">Membrane</keyword>
<keyword id="KW-0547">Nucleotide-binding</keyword>
<keyword id="KW-0636">Prenylation</keyword>
<keyword id="KW-0653">Protein transport</keyword>
<keyword id="KW-1185">Reference proteome</keyword>
<keyword id="KW-0813">Transport</keyword>
<dbReference type="EMBL" id="X59152">
    <property type="protein sequence ID" value="CAA41863.1"/>
    <property type="molecule type" value="mRNA"/>
</dbReference>
<dbReference type="EMBL" id="Z22958">
    <property type="protein sequence ID" value="CAA80534.1"/>
    <property type="molecule type" value="Genomic_DNA"/>
</dbReference>
<dbReference type="EMBL" id="AB019224">
    <property type="protein sequence ID" value="BAB09498.1"/>
    <property type="molecule type" value="Genomic_DNA"/>
</dbReference>
<dbReference type="EMBL" id="CP002688">
    <property type="protein sequence ID" value="AED95208.1"/>
    <property type="molecule type" value="Genomic_DNA"/>
</dbReference>
<dbReference type="EMBL" id="AF389298">
    <property type="protein sequence ID" value="AAK63870.1"/>
    <property type="molecule type" value="mRNA"/>
</dbReference>
<dbReference type="EMBL" id="AY097362">
    <property type="protein sequence ID" value="AAM19878.1"/>
    <property type="molecule type" value="mRNA"/>
</dbReference>
<dbReference type="PIR" id="S23727">
    <property type="entry name" value="S23727"/>
</dbReference>
<dbReference type="RefSeq" id="NP_199326.1">
    <property type="nucleotide sequence ID" value="NM_123881.4"/>
</dbReference>
<dbReference type="SMR" id="P31582"/>
<dbReference type="BioGRID" id="19798">
    <property type="interactions" value="9"/>
</dbReference>
<dbReference type="FunCoup" id="P31582">
    <property type="interactions" value="4562"/>
</dbReference>
<dbReference type="IntAct" id="P31582">
    <property type="interactions" value="12"/>
</dbReference>
<dbReference type="STRING" id="3702.P31582"/>
<dbReference type="PaxDb" id="3702-AT5G45130.1"/>
<dbReference type="ProteomicsDB" id="236628"/>
<dbReference type="EnsemblPlants" id="AT5G45130.1">
    <property type="protein sequence ID" value="AT5G45130.1"/>
    <property type="gene ID" value="AT5G45130"/>
</dbReference>
<dbReference type="GeneID" id="834549"/>
<dbReference type="Gramene" id="AT5G45130.1">
    <property type="protein sequence ID" value="AT5G45130.1"/>
    <property type="gene ID" value="AT5G45130"/>
</dbReference>
<dbReference type="KEGG" id="ath:AT5G45130"/>
<dbReference type="Araport" id="AT5G45130"/>
<dbReference type="TAIR" id="AT5G45130">
    <property type="gene designation" value="RHA1"/>
</dbReference>
<dbReference type="eggNOG" id="KOG0092">
    <property type="taxonomic scope" value="Eukaryota"/>
</dbReference>
<dbReference type="HOGENOM" id="CLU_041217_10_2_1"/>
<dbReference type="InParanoid" id="P31582"/>
<dbReference type="OMA" id="GGPNKTC"/>
<dbReference type="OrthoDB" id="63533at2759"/>
<dbReference type="PhylomeDB" id="P31582"/>
<dbReference type="PRO" id="PR:P31582"/>
<dbReference type="Proteomes" id="UP000006548">
    <property type="component" value="Chromosome 5"/>
</dbReference>
<dbReference type="ExpressionAtlas" id="P31582">
    <property type="expression patterns" value="baseline and differential"/>
</dbReference>
<dbReference type="GO" id="GO:0005783">
    <property type="term" value="C:endoplasmic reticulum"/>
    <property type="evidence" value="ECO:0007005"/>
    <property type="project" value="TAIR"/>
</dbReference>
<dbReference type="GO" id="GO:0010008">
    <property type="term" value="C:endosome membrane"/>
    <property type="evidence" value="ECO:0007669"/>
    <property type="project" value="UniProtKB-SubCell"/>
</dbReference>
<dbReference type="GO" id="GO:0005774">
    <property type="term" value="C:vacuolar membrane"/>
    <property type="evidence" value="ECO:0000315"/>
    <property type="project" value="UniProtKB"/>
</dbReference>
<dbReference type="GO" id="GO:0005525">
    <property type="term" value="F:GTP binding"/>
    <property type="evidence" value="ECO:0000250"/>
    <property type="project" value="TAIR"/>
</dbReference>
<dbReference type="GO" id="GO:0003924">
    <property type="term" value="F:GTPase activity"/>
    <property type="evidence" value="ECO:0007669"/>
    <property type="project" value="InterPro"/>
</dbReference>
<dbReference type="GO" id="GO:0015031">
    <property type="term" value="P:protein transport"/>
    <property type="evidence" value="ECO:0007669"/>
    <property type="project" value="UniProtKB-KW"/>
</dbReference>
<dbReference type="GO" id="GO:0007034">
    <property type="term" value="P:vacuolar transport"/>
    <property type="evidence" value="ECO:0000315"/>
    <property type="project" value="UniProtKB"/>
</dbReference>
<dbReference type="CDD" id="cd01860">
    <property type="entry name" value="Rab5_related"/>
    <property type="match status" value="1"/>
</dbReference>
<dbReference type="FunFam" id="3.40.50.300:FF:000687">
    <property type="entry name" value="Ras-related protein RABF2b"/>
    <property type="match status" value="1"/>
</dbReference>
<dbReference type="Gene3D" id="3.40.50.300">
    <property type="entry name" value="P-loop containing nucleotide triphosphate hydrolases"/>
    <property type="match status" value="1"/>
</dbReference>
<dbReference type="InterPro" id="IPR027417">
    <property type="entry name" value="P-loop_NTPase"/>
</dbReference>
<dbReference type="InterPro" id="IPR005225">
    <property type="entry name" value="Small_GTP-bd"/>
</dbReference>
<dbReference type="InterPro" id="IPR001806">
    <property type="entry name" value="Small_GTPase"/>
</dbReference>
<dbReference type="NCBIfam" id="TIGR00231">
    <property type="entry name" value="small_GTP"/>
    <property type="match status" value="1"/>
</dbReference>
<dbReference type="PANTHER" id="PTHR47978">
    <property type="match status" value="1"/>
</dbReference>
<dbReference type="Pfam" id="PF00071">
    <property type="entry name" value="Ras"/>
    <property type="match status" value="1"/>
</dbReference>
<dbReference type="PRINTS" id="PR00449">
    <property type="entry name" value="RASTRNSFRMNG"/>
</dbReference>
<dbReference type="SMART" id="SM00175">
    <property type="entry name" value="RAB"/>
    <property type="match status" value="1"/>
</dbReference>
<dbReference type="SMART" id="SM00176">
    <property type="entry name" value="RAN"/>
    <property type="match status" value="1"/>
</dbReference>
<dbReference type="SMART" id="SM00173">
    <property type="entry name" value="RAS"/>
    <property type="match status" value="1"/>
</dbReference>
<dbReference type="SMART" id="SM00174">
    <property type="entry name" value="RHO"/>
    <property type="match status" value="1"/>
</dbReference>
<dbReference type="SUPFAM" id="SSF52540">
    <property type="entry name" value="P-loop containing nucleoside triphosphate hydrolases"/>
    <property type="match status" value="1"/>
</dbReference>
<dbReference type="PROSITE" id="PS51419">
    <property type="entry name" value="RAB"/>
    <property type="match status" value="1"/>
</dbReference>
<accession>P31582</accession>
<organism>
    <name type="scientific">Arabidopsis thaliana</name>
    <name type="common">Mouse-ear cress</name>
    <dbReference type="NCBI Taxonomy" id="3702"/>
    <lineage>
        <taxon>Eukaryota</taxon>
        <taxon>Viridiplantae</taxon>
        <taxon>Streptophyta</taxon>
        <taxon>Embryophyta</taxon>
        <taxon>Tracheophyta</taxon>
        <taxon>Spermatophyta</taxon>
        <taxon>Magnoliopsida</taxon>
        <taxon>eudicotyledons</taxon>
        <taxon>Gunneridae</taxon>
        <taxon>Pentapetalae</taxon>
        <taxon>rosids</taxon>
        <taxon>malvids</taxon>
        <taxon>Brassicales</taxon>
        <taxon>Brassicaceae</taxon>
        <taxon>Camelineae</taxon>
        <taxon>Arabidopsis</taxon>
    </lineage>
</organism>
<name>RAF2A_ARATH</name>
<protein>
    <recommendedName>
        <fullName>Ras-related protein RABF2a</fullName>
        <shortName>AtRABF2a</shortName>
    </recommendedName>
    <alternativeName>
        <fullName>Ras-related protein Rab5A</fullName>
        <shortName>AtRab5A</shortName>
    </alternativeName>
    <alternativeName>
        <fullName>Ras-related protein Rha1</fullName>
    </alternativeName>
</protein>
<sequence length="200" mass="21654">MASSGNKNINAKLVLLGDVGAGKSSLVLRFVKDQFVEFQESTIGAAFFSQTLAVNDATVKFEIWDTAGQERYHSLAPMYYRGAAAAIIVFDITNQASFERAKKWVQELQAQGNPNMVMALAGNKADLLDARKVSAEEAEIYAQENSLFFMETSAKTATNVKDIFYEIAKRLPRVQPAENPTGMVLPNGPGATAVSSSCCA</sequence>
<evidence type="ECO:0000250" key="1"/>
<evidence type="ECO:0000250" key="2">
    <source>
        <dbReference type="UniProtKB" id="Q9SN68"/>
    </source>
</evidence>
<evidence type="ECO:0000269" key="3">
    <source>
    </source>
</evidence>
<evidence type="ECO:0000269" key="4">
    <source>
    </source>
</evidence>
<evidence type="ECO:0000269" key="5">
    <source>
    </source>
</evidence>
<evidence type="ECO:0000269" key="6">
    <source>
    </source>
</evidence>
<evidence type="ECO:0000269" key="7">
    <source>
    </source>
</evidence>
<evidence type="ECO:0000269" key="8">
    <source>
    </source>
</evidence>
<evidence type="ECO:0000269" key="9">
    <source>
    </source>
</evidence>
<evidence type="ECO:0000305" key="10"/>
<evidence type="ECO:0000305" key="11">
    <source>
    </source>
</evidence>
<evidence type="ECO:0000305" key="12">
    <source>
    </source>
</evidence>
<reference key="1">
    <citation type="journal article" date="1991" name="Plant J.">
        <title>Molecular characterization of an Arabidopsis thaliana cDNA encoding a small GTP-binding protein, Rha1.</title>
        <authorList>
            <person name="Anuntalabhochai S."/>
            <person name="Terryn N."/>
            <person name="van Montagu M."/>
            <person name="Inze D."/>
        </authorList>
    </citation>
    <scope>NUCLEOTIDE SEQUENCE [MRNA]</scope>
    <source>
        <tissue>Flower</tissue>
    </source>
</reference>
<reference key="2">
    <citation type="journal article" date="1993" name="Plant Cell">
        <title>rha1, a gene encoding a small GTP binding protein from Arabidopsis, is expressed primarily in developing guard cells.</title>
        <authorList>
            <person name="Terryn N."/>
            <person name="Arias M.B."/>
            <person name="Engler G."/>
            <person name="Tire C."/>
            <person name="Villarroel R."/>
            <person name="van Montagu M."/>
            <person name="Inze D."/>
        </authorList>
    </citation>
    <scope>NUCLEOTIDE SEQUENCE [GENOMIC DNA]</scope>
    <source>
        <strain>cv. C24</strain>
    </source>
</reference>
<reference key="3">
    <citation type="journal article" date="2000" name="DNA Res.">
        <title>Structural analysis of Arabidopsis thaliana chromosome 5. X. Sequence features of the regions of 3,076,755 bp covered by sixty P1 and TAC clones.</title>
        <authorList>
            <person name="Sato S."/>
            <person name="Nakamura Y."/>
            <person name="Kaneko T."/>
            <person name="Katoh T."/>
            <person name="Asamizu E."/>
            <person name="Kotani H."/>
            <person name="Tabata S."/>
        </authorList>
    </citation>
    <scope>NUCLEOTIDE SEQUENCE [LARGE SCALE GENOMIC DNA]</scope>
    <source>
        <strain>cv. Columbia</strain>
    </source>
</reference>
<reference key="4">
    <citation type="journal article" date="2017" name="Plant J.">
        <title>Araport11: a complete reannotation of the Arabidopsis thaliana reference genome.</title>
        <authorList>
            <person name="Cheng C.Y."/>
            <person name="Krishnakumar V."/>
            <person name="Chan A.P."/>
            <person name="Thibaud-Nissen F."/>
            <person name="Schobel S."/>
            <person name="Town C.D."/>
        </authorList>
    </citation>
    <scope>GENOME REANNOTATION</scope>
    <source>
        <strain>cv. Columbia</strain>
    </source>
</reference>
<reference key="5">
    <citation type="journal article" date="2003" name="Science">
        <title>Empirical analysis of transcriptional activity in the Arabidopsis genome.</title>
        <authorList>
            <person name="Yamada K."/>
            <person name="Lim J."/>
            <person name="Dale J.M."/>
            <person name="Chen H."/>
            <person name="Shinn P."/>
            <person name="Palm C.J."/>
            <person name="Southwick A.M."/>
            <person name="Wu H.C."/>
            <person name="Kim C.J."/>
            <person name="Nguyen M."/>
            <person name="Pham P.K."/>
            <person name="Cheuk R.F."/>
            <person name="Karlin-Newmann G."/>
            <person name="Liu S.X."/>
            <person name="Lam B."/>
            <person name="Sakano H."/>
            <person name="Wu T."/>
            <person name="Yu G."/>
            <person name="Miranda M."/>
            <person name="Quach H.L."/>
            <person name="Tripp M."/>
            <person name="Chang C.H."/>
            <person name="Lee J.M."/>
            <person name="Toriumi M.J."/>
            <person name="Chan M.M."/>
            <person name="Tang C.C."/>
            <person name="Onodera C.S."/>
            <person name="Deng J.M."/>
            <person name="Akiyama K."/>
            <person name="Ansari Y."/>
            <person name="Arakawa T."/>
            <person name="Banh J."/>
            <person name="Banno F."/>
            <person name="Bowser L."/>
            <person name="Brooks S.Y."/>
            <person name="Carninci P."/>
            <person name="Chao Q."/>
            <person name="Choy N."/>
            <person name="Enju A."/>
            <person name="Goldsmith A.D."/>
            <person name="Gurjal M."/>
            <person name="Hansen N.F."/>
            <person name="Hayashizaki Y."/>
            <person name="Johnson-Hopson C."/>
            <person name="Hsuan V.W."/>
            <person name="Iida K."/>
            <person name="Karnes M."/>
            <person name="Khan S."/>
            <person name="Koesema E."/>
            <person name="Ishida J."/>
            <person name="Jiang P.X."/>
            <person name="Jones T."/>
            <person name="Kawai J."/>
            <person name="Kamiya A."/>
            <person name="Meyers C."/>
            <person name="Nakajima M."/>
            <person name="Narusaka M."/>
            <person name="Seki M."/>
            <person name="Sakurai T."/>
            <person name="Satou M."/>
            <person name="Tamse R."/>
            <person name="Vaysberg M."/>
            <person name="Wallender E.K."/>
            <person name="Wong C."/>
            <person name="Yamamura Y."/>
            <person name="Yuan S."/>
            <person name="Shinozaki K."/>
            <person name="Davis R.W."/>
            <person name="Theologis A."/>
            <person name="Ecker J.R."/>
        </authorList>
    </citation>
    <scope>NUCLEOTIDE SEQUENCE [LARGE SCALE MRNA]</scope>
    <source>
        <strain>cv. Columbia</strain>
    </source>
</reference>
<reference key="6">
    <citation type="journal article" date="2003" name="Plant Cell">
        <title>Rha1, an Arabidopsis Rab5 homolog, plays a critical role in the vacuolar trafficking of soluble cargo proteins.</title>
        <authorList>
            <person name="Sohn E.J."/>
            <person name="Kim E.S."/>
            <person name="Zhao M."/>
            <person name="Kim S.J."/>
            <person name="Kim H."/>
            <person name="Kim Y.W."/>
            <person name="Lee Y.J."/>
            <person name="Hillmer S."/>
            <person name="Sohn U."/>
            <person name="Jiang L."/>
            <person name="Hwang I."/>
        </authorList>
    </citation>
    <scope>FUNCTION</scope>
    <scope>SUBCELLULAR LOCATION</scope>
    <scope>MUTAGENESIS OF SER-24; THR-42 AND 198-CYS-CYS-199</scope>
</reference>
<reference key="7">
    <citation type="journal article" date="2003" name="Plant Physiol.">
        <title>Analysis of the small GTPase gene superfamily of Arabidopsis.</title>
        <authorList>
            <person name="Vernoud V."/>
            <person name="Horton A.C."/>
            <person name="Yang Z."/>
            <person name="Nielsen E."/>
        </authorList>
    </citation>
    <scope>GENE FAMILY</scope>
    <scope>NOMENCLATURE</scope>
</reference>
<reference key="8">
    <citation type="journal article" date="2004" name="Plant Cell Physiol.">
        <title>The Arabidopsis rab5 homologs rha1 and ara7 localize to the prevacuolar compartment.</title>
        <authorList>
            <person name="Lee G.J."/>
            <person name="Sohn E.J."/>
            <person name="Lee M.H."/>
            <person name="Hwang I."/>
        </authorList>
    </citation>
    <scope>SUBCELLULAR LOCATION</scope>
    <scope>MUTAGENESIS OF SER-24; THR-42; GLN-69 AND 198-CYS-CYS-199</scope>
</reference>
<reference key="9">
    <citation type="journal article" date="2007" name="Plant Cell">
        <title>VPS9a, the common activator for two distinct types of Rab5 GTPases, is essential for the development of Arabidopsis thaliana.</title>
        <authorList>
            <person name="Goh T."/>
            <person name="Uchida W."/>
            <person name="Arakawa S."/>
            <person name="Ito E."/>
            <person name="Dainobu T."/>
            <person name="Ebine K."/>
            <person name="Takeuchi M."/>
            <person name="Sato K."/>
            <person name="Ueda T."/>
            <person name="Nakano A."/>
        </authorList>
    </citation>
    <scope>INTERACTION WITH VPS9A</scope>
    <scope>INDUCTION</scope>
    <scope>MUTAGENESIS OF SER-24; GLN-69 AND ASN-123</scope>
</reference>
<reference key="10">
    <citation type="journal article" date="2008" name="Plant Physiol.">
        <title>Transcriptome analyses show changes in gene expression to accompany pollen germination and tube growth in Arabidopsis.</title>
        <authorList>
            <person name="Wang Y."/>
            <person name="Zhang W.Z."/>
            <person name="Song L.F."/>
            <person name="Zou J.J."/>
            <person name="Su Z."/>
            <person name="Wu W.H."/>
        </authorList>
    </citation>
    <scope>DEVELOPMENTAL STAGE</scope>
</reference>
<reference key="11">
    <citation type="journal article" date="2011" name="Traffic">
        <title>Identification of sorting motifs of AtbetaFruct4 for trafficking from the ER to the vacuole through the Golgi and PVC.</title>
        <authorList>
            <person name="Jung C."/>
            <person name="Lee G.J."/>
            <person name="Jang M."/>
            <person name="Lee M."/>
            <person name="Lee J."/>
            <person name="Kang H."/>
            <person name="Sohn E.J."/>
            <person name="Hwang I."/>
        </authorList>
    </citation>
    <scope>FUNCTION</scope>
    <scope>MUTAGENESIS OF SER-24</scope>
</reference>
<reference key="12">
    <citation type="journal article" date="2016" name="Plant Cell">
        <title>ENDOSOMAL RAB EFFECTOR WITH PX-DOMAIN, an interacting partner of RAB5 GTPases, regulates membrane trafficking to protein storage vacuoles in Arabidopsis.</title>
        <authorList>
            <person name="Sakurai H.T."/>
            <person name="Inoue T."/>
            <person name="Nakano A."/>
            <person name="Ueda T."/>
        </authorList>
    </citation>
    <scope>FUNCTION</scope>
    <scope>INTERACTION WITH EREX</scope>
    <scope>MUTAGENESIS OF SER-24</scope>
</reference>
<reference key="13">
    <citation type="journal article" date="2018" name="Proc. Natl. Acad. Sci. U.S.A.">
        <title>Distinct sets of tethering complexes, SNARE complexes, and Rab GTPases mediate membrane fusion at the vacuole in Arabidopsis.</title>
        <authorList>
            <person name="Takemoto K."/>
            <person name="Ebine K."/>
            <person name="Askani J.C."/>
            <person name="Krueger F."/>
            <person name="Gonzalez Z.A."/>
            <person name="Ito E."/>
            <person name="Goh T."/>
            <person name="Schumacher K."/>
            <person name="Nakano A."/>
            <person name="Ueda T."/>
        </authorList>
    </citation>
    <scope>INTERACTION WITH VPS3</scope>
</reference>
<proteinExistence type="evidence at protein level"/>
<comment type="function">
    <text evidence="3 7">Involved in the trafficking of soluble cargo proteins from the prevacuolar compartment to the central vacuole (PubMed:12724533, PubMed:21899678). Involved in vacuolar transport of storage proteins with EREX as effector. Regulates membrane trafficking to protein storage vacuoles (PSVs).</text>
</comment>
<comment type="subunit">
    <text evidence="5 8 9">Interacts with VPS9A (PubMed:18055610). Interacts with EREX (via PX domain) (PubMed:27288222). Binds to VPS3 (PubMed:29463724).</text>
</comment>
<comment type="subcellular location">
    <subcellularLocation>
        <location evidence="3 4">Endosome membrane</location>
        <topology evidence="11 12">Lipid-anchor</topology>
    </subcellularLocation>
    <subcellularLocation>
        <location evidence="3 4">Prevacuolar compartment membrane</location>
        <topology evidence="10">Lipid-anchor</topology>
    </subcellularLocation>
</comment>
<comment type="tissue specificity">
    <text>High in stem, root, and inflorescence.</text>
</comment>
<comment type="developmental stage">
    <text evidence="6">Expressed during pollen germination and pollen tube growth.</text>
</comment>
<comment type="induction">
    <text evidence="5">Activated by VPS9A.</text>
</comment>
<comment type="similarity">
    <text evidence="10">Belongs to the small GTPase superfamily. Rab family.</text>
</comment>
<gene>
    <name type="primary">RABF2A</name>
    <name type="synonym">RAB5A</name>
    <name type="synonym">RHA1</name>
    <name type="ordered locus">At5g45130</name>
    <name type="ORF">K17O22.15</name>
</gene>
<feature type="chain" id="PRO_0000121277" description="Ras-related protein RABF2a">
    <location>
        <begin position="1"/>
        <end position="200"/>
    </location>
</feature>
<feature type="short sequence motif" description="Effector region" evidence="1">
    <location>
        <begin position="39"/>
        <end position="47"/>
    </location>
</feature>
<feature type="binding site" evidence="2">
    <location>
        <begin position="17"/>
        <end position="25"/>
    </location>
    <ligand>
        <name>GTP</name>
        <dbReference type="ChEBI" id="CHEBI:37565"/>
    </ligand>
</feature>
<feature type="binding site" evidence="2">
    <location>
        <begin position="65"/>
        <end position="69"/>
    </location>
    <ligand>
        <name>GTP</name>
        <dbReference type="ChEBI" id="CHEBI:37565"/>
    </ligand>
</feature>
<feature type="binding site" evidence="2">
    <location>
        <begin position="123"/>
        <end position="126"/>
    </location>
    <ligand>
        <name>GTP</name>
        <dbReference type="ChEBI" id="CHEBI:37565"/>
    </ligand>
</feature>
<feature type="binding site" evidence="2">
    <location>
        <begin position="153"/>
        <end position="154"/>
    </location>
    <ligand>
        <name>GTP</name>
        <dbReference type="ChEBI" id="CHEBI:37565"/>
    </ligand>
</feature>
<feature type="lipid moiety-binding region" description="S-geranylgeranyl cysteine" evidence="1">
    <location>
        <position position="198"/>
    </location>
</feature>
<feature type="lipid moiety-binding region" description="S-geranylgeranyl cysteine" evidence="1">
    <location>
        <position position="199"/>
    </location>
</feature>
<feature type="mutagenesis site" description="Dominant negative (GDP-bound form); loss of targeting to the prevacuolar compartment. Inhibits vacuolar trafficking. No effect on the interaction with VPS9A. Loss of interaction with EREX." evidence="3 4 5 7 8">
    <original>S</original>
    <variation>N</variation>
    <location>
        <position position="24"/>
    </location>
</feature>
<feature type="mutagenesis site" description="Loss of targeting to the prevacuolar compartment, but no effect on the vacuolar trafficking." evidence="3 4">
    <original>T</original>
    <variation>A</variation>
    <location>
        <position position="42"/>
    </location>
</feature>
<feature type="mutagenesis site" description="Constitutively active (GTP-bound form); no effect on the targeting to the prevacuolar compartment. Loss of interaction with VPS9A." evidence="4 5">
    <original>Q</original>
    <variation>L</variation>
    <location>
        <position position="69"/>
    </location>
</feature>
<feature type="mutagenesis site" description="Blocks nucleotide binding; no effect on the interaction with VPS9A." evidence="5">
    <original>N</original>
    <variation>I</variation>
    <location>
        <position position="123"/>
    </location>
</feature>
<feature type="mutagenesis site" description="Loss of targeting to the prevacuolar compartment, but no effect on the vacuolar trafficking." evidence="3 4">
    <original>CC</original>
    <variation>SS</variation>
    <location>
        <begin position="198"/>
        <end position="199"/>
    </location>
</feature>